<keyword id="KW-0001">2Fe-2S</keyword>
<keyword id="KW-0058">Aromatic hydrocarbons catabolism</keyword>
<keyword id="KW-0223">Dioxygenase</keyword>
<keyword id="KW-0408">Iron</keyword>
<keyword id="KW-0411">Iron-sulfur</keyword>
<keyword id="KW-0479">Metal-binding</keyword>
<keyword id="KW-0520">NAD</keyword>
<keyword id="KW-0560">Oxidoreductase</keyword>
<protein>
    <recommendedName>
        <fullName evidence="1">3-phenylpropionate/cinnamic acid dioxygenase subunit alpha</fullName>
        <ecNumber evidence="1">1.14.12.19</ecNumber>
    </recommendedName>
</protein>
<accession>Q31XV2</accession>
<reference key="1">
    <citation type="journal article" date="2005" name="Nucleic Acids Res.">
        <title>Genome dynamics and diversity of Shigella species, the etiologic agents of bacillary dysentery.</title>
        <authorList>
            <person name="Yang F."/>
            <person name="Yang J."/>
            <person name="Zhang X."/>
            <person name="Chen L."/>
            <person name="Jiang Y."/>
            <person name="Yan Y."/>
            <person name="Tang X."/>
            <person name="Wang J."/>
            <person name="Xiong Z."/>
            <person name="Dong J."/>
            <person name="Xue Y."/>
            <person name="Zhu Y."/>
            <person name="Xu X."/>
            <person name="Sun L."/>
            <person name="Chen S."/>
            <person name="Nie H."/>
            <person name="Peng J."/>
            <person name="Xu J."/>
            <person name="Wang Y."/>
            <person name="Yuan Z."/>
            <person name="Wen Y."/>
            <person name="Yao Z."/>
            <person name="Shen Y."/>
            <person name="Qiang B."/>
            <person name="Hou Y."/>
            <person name="Yu J."/>
            <person name="Jin Q."/>
        </authorList>
    </citation>
    <scope>NUCLEOTIDE SEQUENCE [LARGE SCALE GENOMIC DNA]</scope>
    <source>
        <strain>Sb227</strain>
    </source>
</reference>
<gene>
    <name evidence="1" type="primary">hcaE</name>
    <name type="ordered locus">SBO_2562</name>
</gene>
<proteinExistence type="inferred from homology"/>
<name>HCAE_SHIBS</name>
<comment type="function">
    <text evidence="1">Part of the multicomponent 3-phenylpropionate dioxygenase. Converts 3-phenylpropionic acid (PP) and cinnamic acid (CI) into 3-phenylpropionate-dihydrodiol (PP-dihydrodiol) and cinnamic acid-dihydrodiol (CI-dihydrodiol), respectively.</text>
</comment>
<comment type="catalytic activity">
    <reaction evidence="1">
        <text>3-phenylpropanoate + NADH + O2 + H(+) = 3-(cis-5,6-dihydroxycyclohexa-1,3-dien-1-yl)propanoate + NAD(+)</text>
        <dbReference type="Rhea" id="RHEA:20357"/>
        <dbReference type="ChEBI" id="CHEBI:15378"/>
        <dbReference type="ChEBI" id="CHEBI:15379"/>
        <dbReference type="ChEBI" id="CHEBI:51057"/>
        <dbReference type="ChEBI" id="CHEBI:57540"/>
        <dbReference type="ChEBI" id="CHEBI:57945"/>
        <dbReference type="ChEBI" id="CHEBI:60087"/>
        <dbReference type="EC" id="1.14.12.19"/>
    </reaction>
</comment>
<comment type="catalytic activity">
    <reaction evidence="1">
        <text>(E)-cinnamate + NADH + O2 + H(+) = (2E)-3-(cis-5,6-dihydroxycyclohexa-1,3-dien-1-yl)prop-2-enoate + NAD(+)</text>
        <dbReference type="Rhea" id="RHEA:25058"/>
        <dbReference type="ChEBI" id="CHEBI:15378"/>
        <dbReference type="ChEBI" id="CHEBI:15379"/>
        <dbReference type="ChEBI" id="CHEBI:15669"/>
        <dbReference type="ChEBI" id="CHEBI:57540"/>
        <dbReference type="ChEBI" id="CHEBI:57945"/>
        <dbReference type="ChEBI" id="CHEBI:61451"/>
        <dbReference type="EC" id="1.14.12.19"/>
    </reaction>
</comment>
<comment type="cofactor">
    <cofactor evidence="1">
        <name>Fe cation</name>
        <dbReference type="ChEBI" id="CHEBI:24875"/>
    </cofactor>
    <text evidence="1">Binds 1 Fe cation.</text>
</comment>
<comment type="cofactor">
    <cofactor evidence="1">
        <name>[2Fe-2S] cluster</name>
        <dbReference type="ChEBI" id="CHEBI:190135"/>
    </cofactor>
    <text evidence="1">Binds 1 [2Fe-2S] cluster per subunit.</text>
</comment>
<comment type="pathway">
    <text evidence="1">Aromatic compound metabolism; 3-phenylpropanoate degradation.</text>
</comment>
<comment type="subunit">
    <text evidence="1">This dioxygenase system consists of four proteins: the two subunits of the hydroxylase component (HcaE and HcaF), a ferredoxin (HcaC) and a ferredoxin reductase (HcaD).</text>
</comment>
<comment type="similarity">
    <text evidence="1">Belongs to the bacterial ring-hydroxylating dioxygenase alpha subunit family.</text>
</comment>
<sequence>MTTPSDLNIYQLIDTQNGRVTPRIYTDPDIYQLELERIFGRCWLFLAHESQIPKPGDFFNTYMGEDAVVVVRQKDGSIKAFLNQCRHRAMRVSYADCGNTRAFTCPYHGWSYGINGELIDVPLEPRAYPQGLCKSHWGLNEVPCVESYKGLIFGNWDTSAPGLRDYLGDIAWYLDGMLDRREGGTEIVGGVQKWVINCNWKSPAEQFASDQYHALFSHASAVQVLGAKDDGSDKRLGDGQTARPVWETAKDALQFGQDGHGSGFFFTEKPDANVWVDGAVSSYYRETYAEAEQRLGEVRALRLAGHNNIFPTLSWLNGTATLRVWHPRGPDQVEVWAFCITDKAASDEVKAAFENSATRAFGPAGFLEQDDSENWCEIQKLLKGHRARNSKLCLEMGLGQEKRRDDGIPGITNYIFSETAARGMYQRWADLLSSESWQEVLDKTAAYQQEVMK</sequence>
<organism>
    <name type="scientific">Shigella boydii serotype 4 (strain Sb227)</name>
    <dbReference type="NCBI Taxonomy" id="300268"/>
    <lineage>
        <taxon>Bacteria</taxon>
        <taxon>Pseudomonadati</taxon>
        <taxon>Pseudomonadota</taxon>
        <taxon>Gammaproteobacteria</taxon>
        <taxon>Enterobacterales</taxon>
        <taxon>Enterobacteriaceae</taxon>
        <taxon>Shigella</taxon>
    </lineage>
</organism>
<feature type="chain" id="PRO_0000333706" description="3-phenylpropionate/cinnamic acid dioxygenase subunit alpha">
    <location>
        <begin position="1"/>
        <end position="453"/>
    </location>
</feature>
<feature type="domain" description="Rieske" evidence="1">
    <location>
        <begin position="44"/>
        <end position="142"/>
    </location>
</feature>
<feature type="binding site" evidence="1">
    <location>
        <position position="85"/>
    </location>
    <ligand>
        <name>[2Fe-2S] cluster</name>
        <dbReference type="ChEBI" id="CHEBI:190135"/>
    </ligand>
</feature>
<feature type="binding site" evidence="1">
    <location>
        <position position="87"/>
    </location>
    <ligand>
        <name>[2Fe-2S] cluster</name>
        <dbReference type="ChEBI" id="CHEBI:190135"/>
    </ligand>
</feature>
<feature type="binding site" evidence="1">
    <location>
        <position position="105"/>
    </location>
    <ligand>
        <name>[2Fe-2S] cluster</name>
        <dbReference type="ChEBI" id="CHEBI:190135"/>
    </ligand>
</feature>
<feature type="binding site" evidence="1">
    <location>
        <position position="108"/>
    </location>
    <ligand>
        <name>[2Fe-2S] cluster</name>
        <dbReference type="ChEBI" id="CHEBI:190135"/>
    </ligand>
</feature>
<feature type="binding site" evidence="1">
    <location>
        <position position="213"/>
    </location>
    <ligand>
        <name>Fe cation</name>
        <dbReference type="ChEBI" id="CHEBI:24875"/>
    </ligand>
</feature>
<feature type="binding site" evidence="1">
    <location>
        <position position="218"/>
    </location>
    <ligand>
        <name>Fe cation</name>
        <dbReference type="ChEBI" id="CHEBI:24875"/>
    </ligand>
</feature>
<evidence type="ECO:0000255" key="1">
    <source>
        <dbReference type="HAMAP-Rule" id="MF_01648"/>
    </source>
</evidence>
<dbReference type="EC" id="1.14.12.19" evidence="1"/>
<dbReference type="EMBL" id="CP000036">
    <property type="protein sequence ID" value="ABB67106.1"/>
    <property type="molecule type" value="Genomic_DNA"/>
</dbReference>
<dbReference type="RefSeq" id="WP_000211182.1">
    <property type="nucleotide sequence ID" value="NC_007613.1"/>
</dbReference>
<dbReference type="SMR" id="Q31XV2"/>
<dbReference type="KEGG" id="sbo:SBO_2562"/>
<dbReference type="HOGENOM" id="CLU_026244_4_0_6"/>
<dbReference type="UniPathway" id="UPA00714"/>
<dbReference type="Proteomes" id="UP000007067">
    <property type="component" value="Chromosome"/>
</dbReference>
<dbReference type="GO" id="GO:0051537">
    <property type="term" value="F:2 iron, 2 sulfur cluster binding"/>
    <property type="evidence" value="ECO:0007669"/>
    <property type="project" value="UniProtKB-KW"/>
</dbReference>
<dbReference type="GO" id="GO:0008695">
    <property type="term" value="F:3-phenylpropionate dioxygenase activity"/>
    <property type="evidence" value="ECO:0007669"/>
    <property type="project" value="UniProtKB-UniRule"/>
</dbReference>
<dbReference type="GO" id="GO:0005506">
    <property type="term" value="F:iron ion binding"/>
    <property type="evidence" value="ECO:0007669"/>
    <property type="project" value="UniProtKB-UniRule"/>
</dbReference>
<dbReference type="GO" id="GO:0019380">
    <property type="term" value="P:3-phenylpropionate catabolic process"/>
    <property type="evidence" value="ECO:0007669"/>
    <property type="project" value="UniProtKB-UniRule"/>
</dbReference>
<dbReference type="CDD" id="cd08881">
    <property type="entry name" value="RHO_alpha_C_NDO-like"/>
    <property type="match status" value="1"/>
</dbReference>
<dbReference type="FunFam" id="2.102.10.10:FF:000004">
    <property type="entry name" value="3-phenylpropionate/cinnamic acid dioxygenase subunit alpha"/>
    <property type="match status" value="1"/>
</dbReference>
<dbReference type="Gene3D" id="3.90.380.10">
    <property type="entry name" value="Naphthalene 1,2-dioxygenase Alpha Subunit, Chain A, domain 1"/>
    <property type="match status" value="1"/>
</dbReference>
<dbReference type="Gene3D" id="2.102.10.10">
    <property type="entry name" value="Rieske [2Fe-2S] iron-sulphur domain"/>
    <property type="match status" value="1"/>
</dbReference>
<dbReference type="HAMAP" id="MF_01648">
    <property type="entry name" value="HcaE"/>
    <property type="match status" value="1"/>
</dbReference>
<dbReference type="InterPro" id="IPR054883">
    <property type="entry name" value="3PPDioc_HcaE"/>
</dbReference>
<dbReference type="InterPro" id="IPR020875">
    <property type="entry name" value="HcaE"/>
</dbReference>
<dbReference type="InterPro" id="IPR043266">
    <property type="entry name" value="RHO_NdoB-like_C"/>
</dbReference>
<dbReference type="InterPro" id="IPR017941">
    <property type="entry name" value="Rieske_2Fe-2S"/>
</dbReference>
<dbReference type="InterPro" id="IPR036922">
    <property type="entry name" value="Rieske_2Fe-2S_sf"/>
</dbReference>
<dbReference type="InterPro" id="IPR015881">
    <property type="entry name" value="Ring-hydroxy_dOase_2Fe2S_BS"/>
</dbReference>
<dbReference type="InterPro" id="IPR015879">
    <property type="entry name" value="Ring_hydroxy_dOase_asu_C_dom"/>
</dbReference>
<dbReference type="InterPro" id="IPR001663">
    <property type="entry name" value="Rng_hydr_dOase-A"/>
</dbReference>
<dbReference type="NCBIfam" id="NF042946">
    <property type="entry name" value="3PPDioc_HcaE"/>
    <property type="match status" value="1"/>
</dbReference>
<dbReference type="PANTHER" id="PTHR43756:SF1">
    <property type="entry name" value="3-PHENYLPROPIONATE_CINNAMIC ACID DIOXYGENASE SUBUNIT ALPHA"/>
    <property type="match status" value="1"/>
</dbReference>
<dbReference type="PANTHER" id="PTHR43756">
    <property type="entry name" value="CHOLINE MONOOXYGENASE, CHLOROPLASTIC"/>
    <property type="match status" value="1"/>
</dbReference>
<dbReference type="Pfam" id="PF00355">
    <property type="entry name" value="Rieske"/>
    <property type="match status" value="1"/>
</dbReference>
<dbReference type="Pfam" id="PF00848">
    <property type="entry name" value="Ring_hydroxyl_A"/>
    <property type="match status" value="1"/>
</dbReference>
<dbReference type="PRINTS" id="PR00090">
    <property type="entry name" value="RNGDIOXGNASE"/>
</dbReference>
<dbReference type="SUPFAM" id="SSF55961">
    <property type="entry name" value="Bet v1-like"/>
    <property type="match status" value="1"/>
</dbReference>
<dbReference type="SUPFAM" id="SSF50022">
    <property type="entry name" value="ISP domain"/>
    <property type="match status" value="1"/>
</dbReference>
<dbReference type="PROSITE" id="PS51296">
    <property type="entry name" value="RIESKE"/>
    <property type="match status" value="1"/>
</dbReference>
<dbReference type="PROSITE" id="PS00570">
    <property type="entry name" value="RING_HYDROXYL_ALPHA"/>
    <property type="match status" value="1"/>
</dbReference>